<protein>
    <recommendedName>
        <fullName>Casparian strip membrane protein 2</fullName>
        <shortName>OsCASP2</shortName>
    </recommendedName>
</protein>
<sequence>MSGSDTSGSVHVDEHGHGKASSSYDGAGAPAPAPAPFQGHRKAGSGSSDVPFLLRSGGSGGDGLRRCLGLIDFVLRVAAFGPTLAAAISIGTSDERLSVFTNYFQFRARFDDFPAFEFFIVANAIAAGYMVLSLPFSAATIMSSKATGVKLLLLICDTIMVGLLTAAASAAAAMVYVAHEGNLRANWVPICLQFHGFCQRTSGAVIASFLAVFVLMVLIVMAAFTMPRRTHHTAS</sequence>
<evidence type="ECO:0000250" key="1"/>
<evidence type="ECO:0000255" key="2"/>
<evidence type="ECO:0000256" key="3">
    <source>
        <dbReference type="SAM" id="MobiDB-lite"/>
    </source>
</evidence>
<evidence type="ECO:0000305" key="4"/>
<gene>
    <name type="ORF">OsI_27482</name>
</gene>
<feature type="chain" id="PRO_0000370288" description="Casparian strip membrane protein 2">
    <location>
        <begin position="1"/>
        <end position="235"/>
    </location>
</feature>
<feature type="topological domain" description="Cytoplasmic" evidence="2">
    <location>
        <begin position="1"/>
        <end position="67"/>
    </location>
</feature>
<feature type="transmembrane region" description="Helical" evidence="2">
    <location>
        <begin position="68"/>
        <end position="88"/>
    </location>
</feature>
<feature type="topological domain" description="Extracellular" evidence="2">
    <location>
        <begin position="89"/>
        <end position="115"/>
    </location>
</feature>
<feature type="transmembrane region" description="Helical" evidence="2">
    <location>
        <begin position="116"/>
        <end position="136"/>
    </location>
</feature>
<feature type="topological domain" description="Cytoplasmic" evidence="2">
    <location>
        <begin position="137"/>
        <end position="150"/>
    </location>
</feature>
<feature type="transmembrane region" description="Helical" evidence="2">
    <location>
        <begin position="151"/>
        <end position="171"/>
    </location>
</feature>
<feature type="topological domain" description="Extracellular" evidence="2">
    <location>
        <begin position="172"/>
        <end position="203"/>
    </location>
</feature>
<feature type="transmembrane region" description="Helical" evidence="2">
    <location>
        <begin position="204"/>
        <end position="224"/>
    </location>
</feature>
<feature type="topological domain" description="Cytoplasmic" evidence="2">
    <location>
        <begin position="225"/>
        <end position="235"/>
    </location>
</feature>
<feature type="region of interest" description="Disordered" evidence="3">
    <location>
        <begin position="1"/>
        <end position="46"/>
    </location>
</feature>
<name>CASP2_ORYSI</name>
<keyword id="KW-1003">Cell membrane</keyword>
<keyword id="KW-0961">Cell wall biogenesis/degradation</keyword>
<keyword id="KW-0472">Membrane</keyword>
<keyword id="KW-1185">Reference proteome</keyword>
<keyword id="KW-0812">Transmembrane</keyword>
<keyword id="KW-1133">Transmembrane helix</keyword>
<reference key="1">
    <citation type="journal article" date="2005" name="PLoS Biol.">
        <title>The genomes of Oryza sativa: a history of duplications.</title>
        <authorList>
            <person name="Yu J."/>
            <person name="Wang J."/>
            <person name="Lin W."/>
            <person name="Li S."/>
            <person name="Li H."/>
            <person name="Zhou J."/>
            <person name="Ni P."/>
            <person name="Dong W."/>
            <person name="Hu S."/>
            <person name="Zeng C."/>
            <person name="Zhang J."/>
            <person name="Zhang Y."/>
            <person name="Li R."/>
            <person name="Xu Z."/>
            <person name="Li S."/>
            <person name="Li X."/>
            <person name="Zheng H."/>
            <person name="Cong L."/>
            <person name="Lin L."/>
            <person name="Yin J."/>
            <person name="Geng J."/>
            <person name="Li G."/>
            <person name="Shi J."/>
            <person name="Liu J."/>
            <person name="Lv H."/>
            <person name="Li J."/>
            <person name="Wang J."/>
            <person name="Deng Y."/>
            <person name="Ran L."/>
            <person name="Shi X."/>
            <person name="Wang X."/>
            <person name="Wu Q."/>
            <person name="Li C."/>
            <person name="Ren X."/>
            <person name="Wang J."/>
            <person name="Wang X."/>
            <person name="Li D."/>
            <person name="Liu D."/>
            <person name="Zhang X."/>
            <person name="Ji Z."/>
            <person name="Zhao W."/>
            <person name="Sun Y."/>
            <person name="Zhang Z."/>
            <person name="Bao J."/>
            <person name="Han Y."/>
            <person name="Dong L."/>
            <person name="Ji J."/>
            <person name="Chen P."/>
            <person name="Wu S."/>
            <person name="Liu J."/>
            <person name="Xiao Y."/>
            <person name="Bu D."/>
            <person name="Tan J."/>
            <person name="Yang L."/>
            <person name="Ye C."/>
            <person name="Zhang J."/>
            <person name="Xu J."/>
            <person name="Zhou Y."/>
            <person name="Yu Y."/>
            <person name="Zhang B."/>
            <person name="Zhuang S."/>
            <person name="Wei H."/>
            <person name="Liu B."/>
            <person name="Lei M."/>
            <person name="Yu H."/>
            <person name="Li Y."/>
            <person name="Xu H."/>
            <person name="Wei S."/>
            <person name="He X."/>
            <person name="Fang L."/>
            <person name="Zhang Z."/>
            <person name="Zhang Y."/>
            <person name="Huang X."/>
            <person name="Su Z."/>
            <person name="Tong W."/>
            <person name="Li J."/>
            <person name="Tong Z."/>
            <person name="Li S."/>
            <person name="Ye J."/>
            <person name="Wang L."/>
            <person name="Fang L."/>
            <person name="Lei T."/>
            <person name="Chen C.-S."/>
            <person name="Chen H.-C."/>
            <person name="Xu Z."/>
            <person name="Li H."/>
            <person name="Huang H."/>
            <person name="Zhang F."/>
            <person name="Xu H."/>
            <person name="Li N."/>
            <person name="Zhao C."/>
            <person name="Li S."/>
            <person name="Dong L."/>
            <person name="Huang Y."/>
            <person name="Li L."/>
            <person name="Xi Y."/>
            <person name="Qi Q."/>
            <person name="Li W."/>
            <person name="Zhang B."/>
            <person name="Hu W."/>
            <person name="Zhang Y."/>
            <person name="Tian X."/>
            <person name="Jiao Y."/>
            <person name="Liang X."/>
            <person name="Jin J."/>
            <person name="Gao L."/>
            <person name="Zheng W."/>
            <person name="Hao B."/>
            <person name="Liu S.-M."/>
            <person name="Wang W."/>
            <person name="Yuan L."/>
            <person name="Cao M."/>
            <person name="McDermott J."/>
            <person name="Samudrala R."/>
            <person name="Wang J."/>
            <person name="Wong G.K.-S."/>
            <person name="Yang H."/>
        </authorList>
    </citation>
    <scope>NUCLEOTIDE SEQUENCE [LARGE SCALE GENOMIC DNA]</scope>
    <source>
        <strain>cv. 93-11</strain>
    </source>
</reference>
<reference key="2">
    <citation type="journal article" date="2014" name="Plant Physiol.">
        <title>Functional and evolutionary analysis of the CASPARIAN STRIP MEMBRANE DOMAIN PROTEIN family.</title>
        <authorList>
            <person name="Roppolo D."/>
            <person name="Boeckmann B."/>
            <person name="Pfister A."/>
            <person name="Boutet E."/>
            <person name="Rubio M.C."/>
            <person name="Denervaud-Tendon V."/>
            <person name="Vermeer J.E."/>
            <person name="Gheyselinck J."/>
            <person name="Xenarios I."/>
            <person name="Geldner N."/>
        </authorList>
    </citation>
    <scope>GENE FAMILY</scope>
    <scope>NOMENCLATURE</scope>
</reference>
<comment type="function">
    <text evidence="1">Regulates membrane-cell wall junctions and localized cell wall deposition. Required for establishment of the Casparian strip membrane domain (CSD) and the subsequent formation of Casparian strips, a cell wall modification of the root endodermis that determines an apoplastic barrier between the intraorganismal apoplasm and the extraorganismal apoplasm and prevents lateral diffusion (By similarity).</text>
</comment>
<comment type="subunit">
    <text evidence="1">Homodimer and heterodimers.</text>
</comment>
<comment type="subcellular location">
    <subcellularLocation>
        <location evidence="1">Cell membrane</location>
        <topology evidence="1">Multi-pass membrane protein</topology>
    </subcellularLocation>
    <text evidence="1">Very restricted localization following a belt shape within the plasma membrane which coincides with the position of the Casparian strip membrane domain in the root endodermis.</text>
</comment>
<comment type="similarity">
    <text evidence="4">Belongs to the Casparian strip membrane proteins (CASP) family.</text>
</comment>
<accession>A2YQB8</accession>
<dbReference type="EMBL" id="CM000133">
    <property type="protein sequence ID" value="EAZ05279.1"/>
    <property type="molecule type" value="Genomic_DNA"/>
</dbReference>
<dbReference type="STRING" id="39946.A2YQB8"/>
<dbReference type="EnsemblPlants" id="BGIOSGA027833-TA">
    <property type="protein sequence ID" value="BGIOSGA027833-PA"/>
    <property type="gene ID" value="BGIOSGA027833"/>
</dbReference>
<dbReference type="EnsemblPlants" id="OsIR64_08g0000150.01">
    <property type="protein sequence ID" value="OsIR64_08g0000150.01"/>
    <property type="gene ID" value="OsIR64_08g0000150"/>
</dbReference>
<dbReference type="EnsemblPlants" id="OsLaMu_08g0000150.01">
    <property type="protein sequence ID" value="OsLaMu_08g0000150.01"/>
    <property type="gene ID" value="OsLaMu_08g0000150"/>
</dbReference>
<dbReference type="EnsemblPlants" id="OsLima_08g0000150.01">
    <property type="protein sequence ID" value="OsLima_08g0000150.01"/>
    <property type="gene ID" value="OsLima_08g0000150"/>
</dbReference>
<dbReference type="EnsemblPlants" id="OsMH63_08G000150_01">
    <property type="protein sequence ID" value="OsMH63_08G000150_01"/>
    <property type="gene ID" value="OsMH63_08G000150"/>
</dbReference>
<dbReference type="EnsemblPlants" id="OsZS97_08G000140_01">
    <property type="protein sequence ID" value="OsZS97_08G000140_01"/>
    <property type="gene ID" value="OsZS97_08G000140"/>
</dbReference>
<dbReference type="Gramene" id="BGIOSGA027833-TA">
    <property type="protein sequence ID" value="BGIOSGA027833-PA"/>
    <property type="gene ID" value="BGIOSGA027833"/>
</dbReference>
<dbReference type="Gramene" id="OsIR64_08g0000150.01">
    <property type="protein sequence ID" value="OsIR64_08g0000150.01"/>
    <property type="gene ID" value="OsIR64_08g0000150"/>
</dbReference>
<dbReference type="Gramene" id="OsLaMu_08g0000150.01">
    <property type="protein sequence ID" value="OsLaMu_08g0000150.01"/>
    <property type="gene ID" value="OsLaMu_08g0000150"/>
</dbReference>
<dbReference type="Gramene" id="OsLima_08g0000150.01">
    <property type="protein sequence ID" value="OsLima_08g0000150.01"/>
    <property type="gene ID" value="OsLima_08g0000150"/>
</dbReference>
<dbReference type="Gramene" id="OsMH63_08G000150_01">
    <property type="protein sequence ID" value="OsMH63_08G000150_01"/>
    <property type="gene ID" value="OsMH63_08G000150"/>
</dbReference>
<dbReference type="Gramene" id="OsZS97_08G000140_01">
    <property type="protein sequence ID" value="OsZS97_08G000140_01"/>
    <property type="gene ID" value="OsZS97_08G000140"/>
</dbReference>
<dbReference type="HOGENOM" id="CLU_066104_3_1_1"/>
<dbReference type="OMA" id="MPRRTHH"/>
<dbReference type="Proteomes" id="UP000007015">
    <property type="component" value="Chromosome 8"/>
</dbReference>
<dbReference type="GO" id="GO:0005886">
    <property type="term" value="C:plasma membrane"/>
    <property type="evidence" value="ECO:0007669"/>
    <property type="project" value="UniProtKB-SubCell"/>
</dbReference>
<dbReference type="GO" id="GO:0071555">
    <property type="term" value="P:cell wall organization"/>
    <property type="evidence" value="ECO:0007669"/>
    <property type="project" value="UniProtKB-KW"/>
</dbReference>
<dbReference type="InterPro" id="IPR006459">
    <property type="entry name" value="CASP/CASPL"/>
</dbReference>
<dbReference type="InterPro" id="IPR006702">
    <property type="entry name" value="CASP_dom"/>
</dbReference>
<dbReference type="InterPro" id="IPR044173">
    <property type="entry name" value="CASPL"/>
</dbReference>
<dbReference type="NCBIfam" id="TIGR01569">
    <property type="entry name" value="A_tha_TIGR01569"/>
    <property type="match status" value="1"/>
</dbReference>
<dbReference type="PANTHER" id="PTHR36488:SF11">
    <property type="entry name" value="CASP-LIKE PROTEIN"/>
    <property type="match status" value="1"/>
</dbReference>
<dbReference type="PANTHER" id="PTHR36488">
    <property type="entry name" value="CASP-LIKE PROTEIN 1U1"/>
    <property type="match status" value="1"/>
</dbReference>
<dbReference type="Pfam" id="PF04535">
    <property type="entry name" value="CASP_dom"/>
    <property type="match status" value="1"/>
</dbReference>
<proteinExistence type="inferred from homology"/>
<organism>
    <name type="scientific">Oryza sativa subsp. indica</name>
    <name type="common">Rice</name>
    <dbReference type="NCBI Taxonomy" id="39946"/>
    <lineage>
        <taxon>Eukaryota</taxon>
        <taxon>Viridiplantae</taxon>
        <taxon>Streptophyta</taxon>
        <taxon>Embryophyta</taxon>
        <taxon>Tracheophyta</taxon>
        <taxon>Spermatophyta</taxon>
        <taxon>Magnoliopsida</taxon>
        <taxon>Liliopsida</taxon>
        <taxon>Poales</taxon>
        <taxon>Poaceae</taxon>
        <taxon>BOP clade</taxon>
        <taxon>Oryzoideae</taxon>
        <taxon>Oryzeae</taxon>
        <taxon>Oryzinae</taxon>
        <taxon>Oryza</taxon>
        <taxon>Oryza sativa</taxon>
    </lineage>
</organism>